<feature type="initiator methionine" description="Removed" evidence="1">
    <location>
        <position position="1"/>
    </location>
</feature>
<feature type="chain" id="PRO_0000072899" description="Glycine--tRNA ligase beta subunit">
    <location>
        <begin position="2"/>
        <end position="689"/>
    </location>
</feature>
<feature type="sequence conflict" description="In Ref. 1; AAA23915." evidence="2" ref="1">
    <original>S</original>
    <variation>Q</variation>
    <location>
        <position position="2"/>
    </location>
</feature>
<feature type="sequence conflict" description="In Ref. 1; AAA23915." evidence="2" ref="1">
    <original>A</original>
    <variation>P</variation>
    <location>
        <position position="91"/>
    </location>
</feature>
<feature type="sequence conflict" description="In Ref. 1; AAA23915." evidence="2" ref="1">
    <original>DVH</original>
    <variation>AAA</variation>
    <location>
        <begin position="154"/>
        <end position="156"/>
    </location>
</feature>
<feature type="sequence conflict" description="In Ref. 1; AAA23915." evidence="2" ref="1">
    <original>ER</original>
    <variation>DG</variation>
    <location>
        <begin position="211"/>
        <end position="212"/>
    </location>
</feature>
<feature type="sequence conflict" description="In Ref. 1; AAA23915." evidence="2" ref="1">
    <original>L</original>
    <variation>D</variation>
    <location>
        <position position="342"/>
    </location>
</feature>
<feature type="sequence conflict" description="In Ref. 1; AAA23915." evidence="2" ref="1">
    <original>L</original>
    <variation>V</variation>
    <location>
        <position position="361"/>
    </location>
</feature>
<feature type="strand" evidence="3">
    <location>
        <begin position="4"/>
        <end position="13"/>
    </location>
</feature>
<feature type="helix" evidence="3">
    <location>
        <begin position="17"/>
        <end position="19"/>
    </location>
</feature>
<feature type="helix" evidence="3">
    <location>
        <begin position="20"/>
        <end position="36"/>
    </location>
</feature>
<feature type="turn" evidence="3">
    <location>
        <begin position="37"/>
        <end position="39"/>
    </location>
</feature>
<feature type="strand" evidence="3">
    <location>
        <begin position="46"/>
        <end position="50"/>
    </location>
</feature>
<feature type="strand" evidence="3">
    <location>
        <begin position="53"/>
        <end position="61"/>
    </location>
</feature>
<feature type="strand" evidence="3">
    <location>
        <begin position="68"/>
        <end position="73"/>
    </location>
</feature>
<feature type="helix" evidence="3">
    <location>
        <begin position="77"/>
        <end position="79"/>
    </location>
</feature>
<feature type="strand" evidence="3">
    <location>
        <begin position="83"/>
        <end position="87"/>
    </location>
</feature>
<feature type="helix" evidence="3">
    <location>
        <begin position="89"/>
        <end position="98"/>
    </location>
</feature>
<feature type="turn" evidence="3">
    <location>
        <begin position="102"/>
        <end position="104"/>
    </location>
</feature>
<feature type="strand" evidence="3">
    <location>
        <begin position="117"/>
        <end position="122"/>
    </location>
</feature>
<feature type="helix" evidence="3">
    <location>
        <begin position="127"/>
        <end position="140"/>
    </location>
</feature>
<feature type="strand" evidence="3">
    <location>
        <begin position="157"/>
        <end position="159"/>
    </location>
</feature>
<feature type="strand" evidence="3">
    <location>
        <begin position="161"/>
        <end position="168"/>
    </location>
</feature>
<feature type="strand" evidence="4">
    <location>
        <begin position="180"/>
        <end position="182"/>
    </location>
</feature>
<feature type="strand" evidence="3">
    <location>
        <begin position="184"/>
        <end position="186"/>
    </location>
</feature>
<feature type="strand" evidence="3">
    <location>
        <begin position="190"/>
        <end position="193"/>
    </location>
</feature>
<feature type="strand" evidence="3">
    <location>
        <begin position="195"/>
        <end position="198"/>
    </location>
</feature>
<feature type="helix" evidence="3">
    <location>
        <begin position="202"/>
        <end position="204"/>
    </location>
</feature>
<feature type="helix" evidence="3">
    <location>
        <begin position="207"/>
        <end position="211"/>
    </location>
</feature>
<feature type="helix" evidence="3">
    <location>
        <begin position="219"/>
        <end position="237"/>
    </location>
</feature>
<feature type="strand" evidence="3">
    <location>
        <begin position="239"/>
        <end position="241"/>
    </location>
</feature>
<feature type="helix" evidence="3">
    <location>
        <begin position="245"/>
        <end position="252"/>
    </location>
</feature>
<feature type="strand" evidence="3">
    <location>
        <begin position="259"/>
        <end position="264"/>
    </location>
</feature>
<feature type="helix" evidence="3">
    <location>
        <begin position="267"/>
        <end position="271"/>
    </location>
</feature>
<feature type="helix" evidence="3">
    <location>
        <begin position="274"/>
        <end position="283"/>
    </location>
</feature>
<feature type="strand" evidence="3">
    <location>
        <begin position="288"/>
        <end position="291"/>
    </location>
</feature>
<feature type="strand" evidence="3">
    <location>
        <begin position="297"/>
        <end position="307"/>
    </location>
</feature>
<feature type="helix" evidence="3">
    <location>
        <begin position="313"/>
        <end position="337"/>
    </location>
</feature>
<feature type="helix" evidence="3">
    <location>
        <begin position="342"/>
        <end position="345"/>
    </location>
</feature>
<feature type="helix" evidence="3">
    <location>
        <begin position="346"/>
        <end position="349"/>
    </location>
</feature>
<feature type="strand" evidence="4">
    <location>
        <begin position="351"/>
        <end position="355"/>
    </location>
</feature>
<feature type="turn" evidence="4">
    <location>
        <begin position="356"/>
        <end position="358"/>
    </location>
</feature>
<feature type="helix" evidence="3">
    <location>
        <begin position="361"/>
        <end position="378"/>
    </location>
</feature>
<feature type="helix" evidence="3">
    <location>
        <begin position="383"/>
        <end position="391"/>
    </location>
</feature>
<feature type="helix" evidence="3">
    <location>
        <begin position="395"/>
        <end position="398"/>
    </location>
</feature>
<feature type="helix" evidence="3">
    <location>
        <begin position="400"/>
        <end position="404"/>
    </location>
</feature>
<feature type="helix" evidence="3">
    <location>
        <begin position="406"/>
        <end position="408"/>
    </location>
</feature>
<feature type="helix" evidence="3">
    <location>
        <begin position="409"/>
        <end position="420"/>
    </location>
</feature>
<feature type="helix" evidence="3">
    <location>
        <begin position="424"/>
        <end position="432"/>
    </location>
</feature>
<feature type="strand" evidence="3">
    <location>
        <begin position="436"/>
        <end position="438"/>
    </location>
</feature>
<feature type="helix" evidence="3">
    <location>
        <begin position="447"/>
        <end position="467"/>
    </location>
</feature>
<feature type="helix" evidence="3">
    <location>
        <begin position="480"/>
        <end position="493"/>
    </location>
</feature>
<feature type="helix" evidence="3">
    <location>
        <begin position="500"/>
        <end position="509"/>
    </location>
</feature>
<feature type="helix" evidence="4">
    <location>
        <begin position="512"/>
        <end position="514"/>
    </location>
</feature>
<feature type="helix" evidence="3">
    <location>
        <begin position="520"/>
        <end position="538"/>
    </location>
</feature>
<feature type="helix" evidence="3">
    <location>
        <begin position="543"/>
        <end position="551"/>
    </location>
</feature>
<feature type="helix" evidence="3">
    <location>
        <begin position="557"/>
        <end position="569"/>
    </location>
</feature>
<feature type="helix" evidence="4">
    <location>
        <begin position="575"/>
        <end position="591"/>
    </location>
</feature>
<feature type="turn" evidence="4">
    <location>
        <begin position="603"/>
        <end position="605"/>
    </location>
</feature>
<feature type="helix" evidence="4">
    <location>
        <begin position="609"/>
        <end position="631"/>
    </location>
</feature>
<feature type="helix" evidence="4">
    <location>
        <begin position="634"/>
        <end position="641"/>
    </location>
</feature>
<feature type="helix" evidence="4">
    <location>
        <begin position="642"/>
        <end position="644"/>
    </location>
</feature>
<feature type="helix" evidence="4">
    <location>
        <begin position="645"/>
        <end position="654"/>
    </location>
</feature>
<feature type="helix" evidence="4">
    <location>
        <begin position="662"/>
        <end position="679"/>
    </location>
</feature>
<feature type="turn" evidence="4">
    <location>
        <begin position="680"/>
        <end position="682"/>
    </location>
</feature>
<feature type="helix" evidence="4">
    <location>
        <begin position="685"/>
        <end position="687"/>
    </location>
</feature>
<protein>
    <recommendedName>
        <fullName>Glycine--tRNA ligase beta subunit</fullName>
        <ecNumber>6.1.1.14</ecNumber>
    </recommendedName>
    <alternativeName>
        <fullName>Glycyl-tRNA synthetase beta subunit</fullName>
        <shortName>GlyRS</shortName>
    </alternativeName>
</protein>
<gene>
    <name type="primary">glyS</name>
    <name type="synonym">glyS(B)</name>
    <name type="ordered locus">b3559</name>
    <name type="ordered locus">JW3530</name>
</gene>
<name>SYGB_ECOLI</name>
<comment type="catalytic activity">
    <reaction>
        <text>tRNA(Gly) + glycine + ATP = glycyl-tRNA(Gly) + AMP + diphosphate</text>
        <dbReference type="Rhea" id="RHEA:16013"/>
        <dbReference type="Rhea" id="RHEA-COMP:9664"/>
        <dbReference type="Rhea" id="RHEA-COMP:9683"/>
        <dbReference type="ChEBI" id="CHEBI:30616"/>
        <dbReference type="ChEBI" id="CHEBI:33019"/>
        <dbReference type="ChEBI" id="CHEBI:57305"/>
        <dbReference type="ChEBI" id="CHEBI:78442"/>
        <dbReference type="ChEBI" id="CHEBI:78522"/>
        <dbReference type="ChEBI" id="CHEBI:456215"/>
        <dbReference type="EC" id="6.1.1.14"/>
    </reaction>
</comment>
<comment type="subunit">
    <text>Tetramer of two alpha and two beta subunits.</text>
</comment>
<comment type="interaction">
    <interactant intactId="EBI-551400">
        <id>P00961</id>
    </interactant>
    <interactant intactId="EBI-551191">
        <id>P00960</id>
        <label>glyQ</label>
    </interactant>
    <organismsDiffer>false</organismsDiffer>
    <experiments>3</experiments>
</comment>
<comment type="subcellular location">
    <subcellularLocation>
        <location>Cytoplasm</location>
    </subcellularLocation>
</comment>
<comment type="similarity">
    <text evidence="2">Belongs to the class-II aminoacyl-tRNA synthetase family.</text>
</comment>
<proteinExistence type="evidence at protein level"/>
<reference key="1">
    <citation type="journal article" date="1983" name="J. Biol. Chem.">
        <title>Primary structures of both subunits of Escherichia coli glycyl-tRNA synthetase.</title>
        <authorList>
            <person name="Webster T.A."/>
            <person name="Gibson B.W."/>
            <person name="Keng T."/>
            <person name="Biemann K."/>
            <person name="Schimmel P."/>
        </authorList>
    </citation>
    <scope>NUCLEOTIDE SEQUENCE [GENOMIC DNA]</scope>
</reference>
<reference key="2">
    <citation type="journal article" date="1994" name="Nucleic Acids Res.">
        <title>Analysis of the Escherichia coli genome. V. DNA sequence of the region from 76.0 to 81.5 minutes.</title>
        <authorList>
            <person name="Sofia H.J."/>
            <person name="Burland V."/>
            <person name="Daniels D.L."/>
            <person name="Plunkett G. III"/>
            <person name="Blattner F.R."/>
        </authorList>
    </citation>
    <scope>NUCLEOTIDE SEQUENCE [LARGE SCALE GENOMIC DNA]</scope>
    <source>
        <strain>K12 / MG1655 / ATCC 47076</strain>
    </source>
</reference>
<reference key="3">
    <citation type="journal article" date="1997" name="Science">
        <title>The complete genome sequence of Escherichia coli K-12.</title>
        <authorList>
            <person name="Blattner F.R."/>
            <person name="Plunkett G. III"/>
            <person name="Bloch C.A."/>
            <person name="Perna N.T."/>
            <person name="Burland V."/>
            <person name="Riley M."/>
            <person name="Collado-Vides J."/>
            <person name="Glasner J.D."/>
            <person name="Rode C.K."/>
            <person name="Mayhew G.F."/>
            <person name="Gregor J."/>
            <person name="Davis N.W."/>
            <person name="Kirkpatrick H.A."/>
            <person name="Goeden M.A."/>
            <person name="Rose D.J."/>
            <person name="Mau B."/>
            <person name="Shao Y."/>
        </authorList>
    </citation>
    <scope>NUCLEOTIDE SEQUENCE [LARGE SCALE GENOMIC DNA]</scope>
    <source>
        <strain>K12 / MG1655 / ATCC 47076</strain>
    </source>
</reference>
<reference key="4">
    <citation type="journal article" date="2006" name="Mol. Syst. Biol.">
        <title>Highly accurate genome sequences of Escherichia coli K-12 strains MG1655 and W3110.</title>
        <authorList>
            <person name="Hayashi K."/>
            <person name="Morooka N."/>
            <person name="Yamamoto Y."/>
            <person name="Fujita K."/>
            <person name="Isono K."/>
            <person name="Choi S."/>
            <person name="Ohtsubo E."/>
            <person name="Baba T."/>
            <person name="Wanner B.L."/>
            <person name="Mori H."/>
            <person name="Horiuchi T."/>
        </authorList>
    </citation>
    <scope>NUCLEOTIDE SEQUENCE [LARGE SCALE GENOMIC DNA]</scope>
    <source>
        <strain>K12 / W3110 / ATCC 27325 / DSM 5911</strain>
    </source>
</reference>
<reference key="5">
    <citation type="journal article" date="1982" name="J. Biol. Chem.">
        <title>Gene for Escherichia coli glycyl-tRNA synthetase has tandem subunit coding regions in the same reading frame.</title>
        <authorList>
            <person name="Keng T."/>
            <person name="Webster T.A."/>
            <person name="Sauer R.T."/>
            <person name="Schimmel P."/>
        </authorList>
    </citation>
    <scope>NUCLEOTIDE SEQUENCE [GENOMIC DNA] OF 1-20</scope>
</reference>
<reference key="6">
    <citation type="journal article" date="1997" name="Electrophoresis">
        <title>Comparing the predicted and observed properties of proteins encoded in the genome of Escherichia coli K-12.</title>
        <authorList>
            <person name="Link A.J."/>
            <person name="Robison K."/>
            <person name="Church G.M."/>
        </authorList>
    </citation>
    <scope>PROTEIN SEQUENCE OF 2-13</scope>
    <source>
        <strain>K12 / EMG2</strain>
    </source>
</reference>
<reference key="7">
    <citation type="journal article" date="1997" name="Electrophoresis">
        <title>Escherichia coli proteome analysis using the gene-protein database.</title>
        <authorList>
            <person name="VanBogelen R.A."/>
            <person name="Abshire K.Z."/>
            <person name="Moldover B."/>
            <person name="Olson E.R."/>
            <person name="Neidhardt F.C."/>
        </authorList>
    </citation>
    <scope>IDENTIFICATION BY 2D-GEL</scope>
</reference>
<keyword id="KW-0002">3D-structure</keyword>
<keyword id="KW-0030">Aminoacyl-tRNA synthetase</keyword>
<keyword id="KW-0067">ATP-binding</keyword>
<keyword id="KW-0963">Cytoplasm</keyword>
<keyword id="KW-0903">Direct protein sequencing</keyword>
<keyword id="KW-0436">Ligase</keyword>
<keyword id="KW-0547">Nucleotide-binding</keyword>
<keyword id="KW-0648">Protein biosynthesis</keyword>
<keyword id="KW-1185">Reference proteome</keyword>
<organism>
    <name type="scientific">Escherichia coli (strain K12)</name>
    <dbReference type="NCBI Taxonomy" id="83333"/>
    <lineage>
        <taxon>Bacteria</taxon>
        <taxon>Pseudomonadati</taxon>
        <taxon>Pseudomonadota</taxon>
        <taxon>Gammaproteobacteria</taxon>
        <taxon>Enterobacterales</taxon>
        <taxon>Enterobacteriaceae</taxon>
        <taxon>Escherichia</taxon>
    </lineage>
</organism>
<sequence>MSEKTFLVEIGTEELPPKALRSLAESFAANFTAELDNAGLAHGTVQWFAAPRRLALKVANLAEAQPDREIEKRGPAIAQAFDAEGKPSKAAEGWARGCGITVDQAERLTTDKGEWLLYRAHVKGESTEALLPNMVATSLAKLPIPKLMRWGASDVHFVRPVHTVTLLLGDKVIPATILGIQSDRVIRGHRFMGEPEFTIDNADQYPEILRERGKVIADYEERKAKIKADAEEAARKIGGNADLSESLLEEVASLVEWPVVLTAKFEEKFLAVPAEALVYTMKGDQKYFPVYANDGKLLPNFIFVANIESKDPQQIISGNEKVVRPRLADAEFFFNTDRKKRLEDNLPRLQTVLFQQQLGTLRDKTDRIQALAGWIAEQIGADVNHATRAGLLSKCDLMTNMVFEFTDTQGVMGMHYARHDGEAEDVAVALNEQYQPRFAGDDLPSNPVACALAIADKMDTLAGIFGIGQHPKGDKDPFALRRAALGVLRIIVEKNLNLDLQTLTEEAVRLYGDKLTNANVVDDVIDFMLGRFRAWYQDEGYTVDTIQAVLARRPTRPADFDARMKAVSHFRTLDAAAALAAANKRVSNILAKSDEVLSDRVNASTLKEPEEIKLAMQVVVLRDKLEPYFTEGRYQDALVELAELREPVDAFFDKVMVMVDDKELRINRLTMLEKLRELFLRVADISLLQ</sequence>
<accession>P00961</accession>
<accession>Q2M7M1</accession>
<evidence type="ECO:0000269" key="1">
    <source>
    </source>
</evidence>
<evidence type="ECO:0000305" key="2"/>
<evidence type="ECO:0007829" key="3">
    <source>
        <dbReference type="PDB" id="7EIV"/>
    </source>
</evidence>
<evidence type="ECO:0007829" key="4">
    <source>
        <dbReference type="PDB" id="7YSE"/>
    </source>
</evidence>
<dbReference type="EC" id="6.1.1.14"/>
<dbReference type="EMBL" id="J01622">
    <property type="protein sequence ID" value="AAA23915.1"/>
    <property type="molecule type" value="Genomic_DNA"/>
</dbReference>
<dbReference type="EMBL" id="U00039">
    <property type="protein sequence ID" value="AAB18536.1"/>
    <property type="molecule type" value="Genomic_DNA"/>
</dbReference>
<dbReference type="EMBL" id="U00096">
    <property type="protein sequence ID" value="AAC76583.1"/>
    <property type="molecule type" value="Genomic_DNA"/>
</dbReference>
<dbReference type="EMBL" id="AP009048">
    <property type="protein sequence ID" value="BAE77735.1"/>
    <property type="molecule type" value="Genomic_DNA"/>
</dbReference>
<dbReference type="EMBL" id="J01623">
    <property type="protein sequence ID" value="AAA23917.1"/>
    <property type="molecule type" value="Genomic_DNA"/>
</dbReference>
<dbReference type="PIR" id="S47780">
    <property type="entry name" value="SYECGB"/>
</dbReference>
<dbReference type="RefSeq" id="NP_418016.1">
    <property type="nucleotide sequence ID" value="NC_000913.3"/>
</dbReference>
<dbReference type="RefSeq" id="WP_001291772.1">
    <property type="nucleotide sequence ID" value="NZ_SSZK01000041.1"/>
</dbReference>
<dbReference type="PDB" id="7EIV">
    <property type="method" value="X-ray"/>
    <property type="resolution" value="2.68 A"/>
    <property type="chains" value="C/D=1-575"/>
</dbReference>
<dbReference type="PDB" id="7YSE">
    <property type="method" value="X-ray"/>
    <property type="resolution" value="2.91 A"/>
    <property type="chains" value="C/D=1-689"/>
</dbReference>
<dbReference type="PDBsum" id="7EIV"/>
<dbReference type="PDBsum" id="7YSE"/>
<dbReference type="SMR" id="P00961"/>
<dbReference type="BioGRID" id="4259716">
    <property type="interactions" value="30"/>
</dbReference>
<dbReference type="BioGRID" id="852388">
    <property type="interactions" value="1"/>
</dbReference>
<dbReference type="ComplexPortal" id="CPX-5201">
    <property type="entry name" value="Glycyl-tRNA synthetase complex"/>
</dbReference>
<dbReference type="DIP" id="DIP-6880N"/>
<dbReference type="FunCoup" id="P00961">
    <property type="interactions" value="716"/>
</dbReference>
<dbReference type="IntAct" id="P00961">
    <property type="interactions" value="11"/>
</dbReference>
<dbReference type="STRING" id="511145.b3559"/>
<dbReference type="jPOST" id="P00961"/>
<dbReference type="PaxDb" id="511145-b3559"/>
<dbReference type="EnsemblBacteria" id="AAC76583">
    <property type="protein sequence ID" value="AAC76583"/>
    <property type="gene ID" value="b3559"/>
</dbReference>
<dbReference type="GeneID" id="948080"/>
<dbReference type="KEGG" id="ecj:JW3530"/>
<dbReference type="KEGG" id="eco:b3559"/>
<dbReference type="KEGG" id="ecoc:C3026_19295"/>
<dbReference type="PATRIC" id="fig|1411691.4.peg.3154"/>
<dbReference type="EchoBASE" id="EB0405"/>
<dbReference type="eggNOG" id="COG0751">
    <property type="taxonomic scope" value="Bacteria"/>
</dbReference>
<dbReference type="HOGENOM" id="CLU_007220_2_2_6"/>
<dbReference type="InParanoid" id="P00961"/>
<dbReference type="OMA" id="LPIPKRM"/>
<dbReference type="OrthoDB" id="9775440at2"/>
<dbReference type="PhylomeDB" id="P00961"/>
<dbReference type="BioCyc" id="EcoCyc:GLYS-MONOMER"/>
<dbReference type="BioCyc" id="MetaCyc:GLYS-MONOMER"/>
<dbReference type="PRO" id="PR:P00961"/>
<dbReference type="Proteomes" id="UP000000625">
    <property type="component" value="Chromosome"/>
</dbReference>
<dbReference type="GO" id="GO:0005829">
    <property type="term" value="C:cytosol"/>
    <property type="evidence" value="ECO:0000314"/>
    <property type="project" value="EcoCyc"/>
</dbReference>
<dbReference type="GO" id="GO:0009345">
    <property type="term" value="C:glycine-tRNA ligase complex"/>
    <property type="evidence" value="ECO:0000314"/>
    <property type="project" value="EcoCyc"/>
</dbReference>
<dbReference type="GO" id="GO:0004814">
    <property type="term" value="F:arginine-tRNA ligase activity"/>
    <property type="evidence" value="ECO:0007669"/>
    <property type="project" value="InterPro"/>
</dbReference>
<dbReference type="GO" id="GO:0005524">
    <property type="term" value="F:ATP binding"/>
    <property type="evidence" value="ECO:0007669"/>
    <property type="project" value="UniProtKB-UniRule"/>
</dbReference>
<dbReference type="GO" id="GO:0004820">
    <property type="term" value="F:glycine-tRNA ligase activity"/>
    <property type="evidence" value="ECO:0007669"/>
    <property type="project" value="UniProtKB-UniRule"/>
</dbReference>
<dbReference type="GO" id="GO:0000049">
    <property type="term" value="F:tRNA binding"/>
    <property type="evidence" value="ECO:0000314"/>
    <property type="project" value="EcoCyc"/>
</dbReference>
<dbReference type="GO" id="GO:0006420">
    <property type="term" value="P:arginyl-tRNA aminoacylation"/>
    <property type="evidence" value="ECO:0007669"/>
    <property type="project" value="InterPro"/>
</dbReference>
<dbReference type="GO" id="GO:0006426">
    <property type="term" value="P:glycyl-tRNA aminoacylation"/>
    <property type="evidence" value="ECO:0000314"/>
    <property type="project" value="ComplexPortal"/>
</dbReference>
<dbReference type="HAMAP" id="MF_00255">
    <property type="entry name" value="Gly_tRNA_synth_beta"/>
    <property type="match status" value="1"/>
</dbReference>
<dbReference type="InterPro" id="IPR008909">
    <property type="entry name" value="DALR_anticod-bd"/>
</dbReference>
<dbReference type="InterPro" id="IPR015944">
    <property type="entry name" value="Gly-tRNA-synth_bsu"/>
</dbReference>
<dbReference type="InterPro" id="IPR006194">
    <property type="entry name" value="Gly-tRNA-synth_heterodimer"/>
</dbReference>
<dbReference type="NCBIfam" id="TIGR00211">
    <property type="entry name" value="glyS"/>
    <property type="match status" value="1"/>
</dbReference>
<dbReference type="PANTHER" id="PTHR30075:SF2">
    <property type="entry name" value="GLYCINE--TRNA LIGASE, CHLOROPLASTIC_MITOCHONDRIAL 2"/>
    <property type="match status" value="1"/>
</dbReference>
<dbReference type="PANTHER" id="PTHR30075">
    <property type="entry name" value="GLYCYL-TRNA SYNTHETASE"/>
    <property type="match status" value="1"/>
</dbReference>
<dbReference type="Pfam" id="PF05746">
    <property type="entry name" value="DALR_1"/>
    <property type="match status" value="1"/>
</dbReference>
<dbReference type="Pfam" id="PF02092">
    <property type="entry name" value="tRNA_synt_2f"/>
    <property type="match status" value="1"/>
</dbReference>
<dbReference type="PRINTS" id="PR01045">
    <property type="entry name" value="TRNASYNTHGB"/>
</dbReference>
<dbReference type="SUPFAM" id="SSF109604">
    <property type="entry name" value="HD-domain/PDEase-like"/>
    <property type="match status" value="1"/>
</dbReference>
<dbReference type="PROSITE" id="PS50861">
    <property type="entry name" value="AA_TRNA_LIGASE_II_GLYAB"/>
    <property type="match status" value="1"/>
</dbReference>